<protein>
    <recommendedName>
        <fullName>Amylopullulanase</fullName>
    </recommendedName>
    <alternativeName>
        <fullName>Alpha-amylase/pullulanase</fullName>
    </alternativeName>
    <alternativeName>
        <fullName>Pullulanase type II</fullName>
    </alternativeName>
    <domain>
        <recommendedName>
            <fullName>Alpha-amylase</fullName>
            <ecNumber>3.2.1.1</ecNumber>
        </recommendedName>
        <alternativeName>
            <fullName>1,4-alpha-D-glucan glucanohydrolase</fullName>
        </alternativeName>
    </domain>
    <domain>
        <recommendedName>
            <fullName>Pullulanase</fullName>
            <ecNumber>3.2.1.41</ecNumber>
        </recommendedName>
        <alternativeName>
            <fullName>1,4-alpha-D-glucan glucanohydrolase</fullName>
        </alternativeName>
        <alternativeName>
            <fullName>Alpha-dextrin endo-1,6-alpha-glucosidase</fullName>
        </alternativeName>
    </domain>
</protein>
<feature type="signal peptide" evidence="4">
    <location>
        <begin position="1"/>
        <end position="35"/>
    </location>
</feature>
<feature type="chain" id="PRO_0000001325" description="Amylopullulanase">
    <location>
        <begin position="36"/>
        <end position="1861"/>
    </location>
</feature>
<feature type="domain" description="Fibronectin type-III 1" evidence="5">
    <location>
        <begin position="929"/>
        <end position="1021"/>
    </location>
</feature>
<feature type="domain" description="Fibronectin type-III 2" evidence="5">
    <location>
        <begin position="1158"/>
        <end position="1252"/>
    </location>
</feature>
<feature type="domain" description="CBM20" evidence="6">
    <location>
        <begin position="1246"/>
        <end position="1354"/>
    </location>
</feature>
<feature type="domain" description="SLH 1" evidence="7">
    <location>
        <begin position="1677"/>
        <end position="1740"/>
    </location>
</feature>
<feature type="domain" description="SLH 2" evidence="7">
    <location>
        <begin position="1741"/>
        <end position="1799"/>
    </location>
</feature>
<feature type="domain" description="SLH 3" evidence="7">
    <location>
        <begin position="1802"/>
        <end position="1861"/>
    </location>
</feature>
<feature type="region of interest" description="Disordered" evidence="8">
    <location>
        <begin position="1448"/>
        <end position="1486"/>
    </location>
</feature>
<feature type="compositionally biased region" description="Low complexity" evidence="8">
    <location>
        <begin position="1450"/>
        <end position="1486"/>
    </location>
</feature>
<feature type="active site" description="Nucleophile" evidence="3">
    <location>
        <position position="628"/>
    </location>
</feature>
<feature type="active site" description="Proton donor" evidence="3">
    <location>
        <position position="657"/>
    </location>
</feature>
<feature type="binding site" evidence="3">
    <location>
        <position position="248"/>
    </location>
    <ligand>
        <name>Ca(2+)</name>
        <dbReference type="ChEBI" id="CHEBI:29108"/>
        <label>1</label>
    </ligand>
</feature>
<feature type="binding site" evidence="3">
    <location>
        <position position="250"/>
    </location>
    <ligand>
        <name>Ca(2+)</name>
        <dbReference type="ChEBI" id="CHEBI:29108"/>
        <label>1</label>
    </ligand>
</feature>
<feature type="binding site" evidence="3">
    <location>
        <position position="288"/>
    </location>
    <ligand>
        <name>Ca(2+)</name>
        <dbReference type="ChEBI" id="CHEBI:29108"/>
        <label>1</label>
    </ligand>
</feature>
<feature type="binding site" evidence="3">
    <location>
        <position position="343"/>
    </location>
    <ligand>
        <name>Ca(2+)</name>
        <dbReference type="ChEBI" id="CHEBI:29108"/>
        <label>1</label>
    </ligand>
</feature>
<feature type="binding site" evidence="3">
    <location>
        <position position="401"/>
    </location>
    <ligand>
        <name>Ca(2+)</name>
        <dbReference type="ChEBI" id="CHEBI:29108"/>
        <label>2</label>
    </ligand>
</feature>
<feature type="binding site" evidence="3">
    <location>
        <position position="403"/>
    </location>
    <ligand>
        <name>Ca(2+)</name>
        <dbReference type="ChEBI" id="CHEBI:29108"/>
        <label>2</label>
    </ligand>
</feature>
<feature type="binding site" evidence="3">
    <location>
        <position position="406"/>
    </location>
    <ligand>
        <name>Ca(2+)</name>
        <dbReference type="ChEBI" id="CHEBI:29108"/>
        <label>2</label>
    </ligand>
</feature>
<feature type="binding site" evidence="3">
    <location>
        <position position="407"/>
    </location>
    <ligand>
        <name>Ca(2+)</name>
        <dbReference type="ChEBI" id="CHEBI:29108"/>
        <label>2</label>
    </ligand>
</feature>
<feature type="binding site" evidence="3">
    <location>
        <position position="453"/>
    </location>
    <ligand>
        <name>Ca(2+)</name>
        <dbReference type="ChEBI" id="CHEBI:29108"/>
        <label>2</label>
    </ligand>
</feature>
<feature type="binding site" evidence="2">
    <location>
        <position position="526"/>
    </location>
    <ligand>
        <name>substrate</name>
    </ligand>
</feature>
<feature type="binding site" evidence="2">
    <location>
        <position position="626"/>
    </location>
    <ligand>
        <name>substrate</name>
    </ligand>
</feature>
<feature type="binding site" evidence="2">
    <location>
        <begin position="733"/>
        <end position="734"/>
    </location>
    <ligand>
        <name>substrate</name>
    </ligand>
</feature>
<feature type="binding site" evidence="2">
    <location>
        <position position="793"/>
    </location>
    <ligand>
        <name>substrate</name>
    </ligand>
</feature>
<feature type="binding site" evidence="2">
    <location>
        <position position="797"/>
    </location>
    <ligand>
        <name>substrate</name>
    </ligand>
</feature>
<feature type="site" description="Transition state stabilizer" evidence="1">
    <location>
        <position position="734"/>
    </location>
</feature>
<feature type="sequence conflict" description="In Ref. 1; AAB00841." evidence="9" ref="1">
    <original>D</original>
    <variation>E</variation>
    <location>
        <position position="1734"/>
    </location>
</feature>
<evidence type="ECO:0000250" key="1"/>
<evidence type="ECO:0000250" key="2">
    <source>
        <dbReference type="UniProtKB" id="P38940"/>
    </source>
</evidence>
<evidence type="ECO:0000250" key="3">
    <source>
        <dbReference type="UniProtKB" id="Q60053"/>
    </source>
</evidence>
<evidence type="ECO:0000255" key="4"/>
<evidence type="ECO:0000255" key="5">
    <source>
        <dbReference type="PROSITE-ProRule" id="PRU00316"/>
    </source>
</evidence>
<evidence type="ECO:0000255" key="6">
    <source>
        <dbReference type="PROSITE-ProRule" id="PRU00594"/>
    </source>
</evidence>
<evidence type="ECO:0000255" key="7">
    <source>
        <dbReference type="PROSITE-ProRule" id="PRU00777"/>
    </source>
</evidence>
<evidence type="ECO:0000256" key="8">
    <source>
        <dbReference type="SAM" id="MobiDB-lite"/>
    </source>
</evidence>
<evidence type="ECO:0000305" key="9"/>
<dbReference type="EC" id="3.2.1.1"/>
<dbReference type="EC" id="3.2.1.41"/>
<dbReference type="EMBL" id="M57692">
    <property type="protein sequence ID" value="AAB00841.1"/>
    <property type="molecule type" value="Genomic_DNA"/>
</dbReference>
<dbReference type="SMR" id="P38536"/>
<dbReference type="CAZy" id="CBM20">
    <property type="family name" value="Carbohydrate-Binding Module Family 20"/>
</dbReference>
<dbReference type="CAZy" id="CBM34">
    <property type="family name" value="Carbohydrate-Binding Module Family 34"/>
</dbReference>
<dbReference type="CAZy" id="GH13">
    <property type="family name" value="Glycoside Hydrolase Family 13"/>
</dbReference>
<dbReference type="GO" id="GO:0005576">
    <property type="term" value="C:extracellular region"/>
    <property type="evidence" value="ECO:0007669"/>
    <property type="project" value="UniProtKB-KW"/>
</dbReference>
<dbReference type="GO" id="GO:0004556">
    <property type="term" value="F:alpha-amylase activity"/>
    <property type="evidence" value="ECO:0007669"/>
    <property type="project" value="UniProtKB-EC"/>
</dbReference>
<dbReference type="GO" id="GO:0046872">
    <property type="term" value="F:metal ion binding"/>
    <property type="evidence" value="ECO:0007669"/>
    <property type="project" value="UniProtKB-KW"/>
</dbReference>
<dbReference type="GO" id="GO:0051060">
    <property type="term" value="F:pullulanase activity"/>
    <property type="evidence" value="ECO:0007669"/>
    <property type="project" value="UniProtKB-EC"/>
</dbReference>
<dbReference type="GO" id="GO:2001070">
    <property type="term" value="F:starch binding"/>
    <property type="evidence" value="ECO:0007669"/>
    <property type="project" value="InterPro"/>
</dbReference>
<dbReference type="GO" id="GO:0005975">
    <property type="term" value="P:carbohydrate metabolic process"/>
    <property type="evidence" value="ECO:0007669"/>
    <property type="project" value="InterPro"/>
</dbReference>
<dbReference type="CDD" id="cd11338">
    <property type="entry name" value="AmyAc_CMD"/>
    <property type="match status" value="1"/>
</dbReference>
<dbReference type="CDD" id="cd02857">
    <property type="entry name" value="E_set_CDase_PDE_N"/>
    <property type="match status" value="1"/>
</dbReference>
<dbReference type="CDD" id="cd00063">
    <property type="entry name" value="FN3"/>
    <property type="match status" value="1"/>
</dbReference>
<dbReference type="CDD" id="cd12962">
    <property type="entry name" value="X25_BaPul_like"/>
    <property type="match status" value="2"/>
</dbReference>
<dbReference type="Gene3D" id="3.20.20.80">
    <property type="entry name" value="Glycosidases"/>
    <property type="match status" value="1"/>
</dbReference>
<dbReference type="Gene3D" id="2.60.40.1180">
    <property type="entry name" value="Golgi alpha-mannosidase II"/>
    <property type="match status" value="1"/>
</dbReference>
<dbReference type="Gene3D" id="2.60.40.10">
    <property type="entry name" value="Immunoglobulins"/>
    <property type="match status" value="6"/>
</dbReference>
<dbReference type="InterPro" id="IPR031319">
    <property type="entry name" value="A-amylase_C"/>
</dbReference>
<dbReference type="InterPro" id="IPR013784">
    <property type="entry name" value="Carb-bd-like_fold"/>
</dbReference>
<dbReference type="InterPro" id="IPR002044">
    <property type="entry name" value="CBM20"/>
</dbReference>
<dbReference type="InterPro" id="IPR003961">
    <property type="entry name" value="FN3_dom"/>
</dbReference>
<dbReference type="InterPro" id="IPR036116">
    <property type="entry name" value="FN3_sf"/>
</dbReference>
<dbReference type="InterPro" id="IPR006047">
    <property type="entry name" value="Glyco_hydro_13_cat_dom"/>
</dbReference>
<dbReference type="InterPro" id="IPR004185">
    <property type="entry name" value="Glyco_hydro_13_lg-like_dom"/>
</dbReference>
<dbReference type="InterPro" id="IPR013780">
    <property type="entry name" value="Glyco_hydro_b"/>
</dbReference>
<dbReference type="InterPro" id="IPR017853">
    <property type="entry name" value="Glycoside_hydrolase_SF"/>
</dbReference>
<dbReference type="InterPro" id="IPR013783">
    <property type="entry name" value="Ig-like_fold"/>
</dbReference>
<dbReference type="InterPro" id="IPR014756">
    <property type="entry name" value="Ig_E-set"/>
</dbReference>
<dbReference type="InterPro" id="IPR001119">
    <property type="entry name" value="SLH_dom"/>
</dbReference>
<dbReference type="InterPro" id="IPR054409">
    <property type="entry name" value="X25_BaPul-like"/>
</dbReference>
<dbReference type="PANTHER" id="PTHR10357">
    <property type="entry name" value="ALPHA-AMYLASE FAMILY MEMBER"/>
    <property type="match status" value="1"/>
</dbReference>
<dbReference type="PANTHER" id="PTHR10357:SF210">
    <property type="entry name" value="MALTODEXTRIN GLUCOSIDASE"/>
    <property type="match status" value="1"/>
</dbReference>
<dbReference type="Pfam" id="PF00128">
    <property type="entry name" value="Alpha-amylase"/>
    <property type="match status" value="1"/>
</dbReference>
<dbReference type="Pfam" id="PF02903">
    <property type="entry name" value="Alpha-amylase_N"/>
    <property type="match status" value="1"/>
</dbReference>
<dbReference type="Pfam" id="PF00395">
    <property type="entry name" value="SLH"/>
    <property type="match status" value="3"/>
</dbReference>
<dbReference type="Pfam" id="PF22058">
    <property type="entry name" value="X25_BaPul_like"/>
    <property type="match status" value="2"/>
</dbReference>
<dbReference type="SMART" id="SM00642">
    <property type="entry name" value="Aamy"/>
    <property type="match status" value="1"/>
</dbReference>
<dbReference type="SMART" id="SM00632">
    <property type="entry name" value="Aamy_C"/>
    <property type="match status" value="1"/>
</dbReference>
<dbReference type="SMART" id="SM01065">
    <property type="entry name" value="CBM_2"/>
    <property type="match status" value="1"/>
</dbReference>
<dbReference type="SMART" id="SM00060">
    <property type="entry name" value="FN3"/>
    <property type="match status" value="2"/>
</dbReference>
<dbReference type="SUPFAM" id="SSF51445">
    <property type="entry name" value="(Trans)glycosidases"/>
    <property type="match status" value="1"/>
</dbReference>
<dbReference type="SUPFAM" id="SSF81296">
    <property type="entry name" value="E set domains"/>
    <property type="match status" value="1"/>
</dbReference>
<dbReference type="SUPFAM" id="SSF49265">
    <property type="entry name" value="Fibronectin type III"/>
    <property type="match status" value="2"/>
</dbReference>
<dbReference type="SUPFAM" id="SSF51011">
    <property type="entry name" value="Glycosyl hydrolase domain"/>
    <property type="match status" value="1"/>
</dbReference>
<dbReference type="SUPFAM" id="SSF49452">
    <property type="entry name" value="Starch-binding domain-like"/>
    <property type="match status" value="1"/>
</dbReference>
<dbReference type="PROSITE" id="PS51166">
    <property type="entry name" value="CBM20"/>
    <property type="match status" value="1"/>
</dbReference>
<dbReference type="PROSITE" id="PS50853">
    <property type="entry name" value="FN3"/>
    <property type="match status" value="2"/>
</dbReference>
<dbReference type="PROSITE" id="PS51272">
    <property type="entry name" value="SLH"/>
    <property type="match status" value="3"/>
</dbReference>
<comment type="catalytic activity">
    <reaction>
        <text>Endohydrolysis of (1-&gt;4)-alpha-D-glucosidic linkages in polysaccharides containing three or more (1-&gt;4)-alpha-linked D-glucose units.</text>
        <dbReference type="EC" id="3.2.1.1"/>
    </reaction>
</comment>
<comment type="catalytic activity">
    <reaction>
        <text>Hydrolysis of (1-&gt;6)-alpha-D-glucosidic linkages in pullulan, amylopectin and glycogen, and in the alpha- and beta-limit dextrins of amylopectin and glycogen.</text>
        <dbReference type="EC" id="3.2.1.41"/>
    </reaction>
</comment>
<comment type="cofactor">
    <cofactor evidence="3">
        <name>Ca(2+)</name>
        <dbReference type="ChEBI" id="CHEBI:29108"/>
    </cofactor>
</comment>
<comment type="subcellular location">
    <subcellularLocation>
        <location>Secreted</location>
        <location>Cell wall</location>
    </subcellularLocation>
    <text>It C-terminus may serve as an S-layer anchor.</text>
</comment>
<comment type="PTM">
    <text>Glycosylated.</text>
</comment>
<comment type="similarity">
    <text evidence="9">Belongs to the glycosyl hydrolase 13 family.</text>
</comment>
<proteinExistence type="inferred from homology"/>
<gene>
    <name type="primary">amyB</name>
</gene>
<organism>
    <name type="scientific">Thermoanaerobacterium thermosulfurigenes</name>
    <name type="common">Clostridium thermosulfurogenes</name>
    <dbReference type="NCBI Taxonomy" id="33950"/>
    <lineage>
        <taxon>Bacteria</taxon>
        <taxon>Bacillati</taxon>
        <taxon>Bacillota</taxon>
        <taxon>Clostridia</taxon>
        <taxon>Thermoanaerobacterales</taxon>
        <taxon>Thermoanaerobacteraceae</taxon>
        <taxon>Thermoanaerobacterium</taxon>
    </lineage>
</organism>
<name>APU_THETU</name>
<accession>P38536</accession>
<sequence length="1861" mass="206104">MNKKLFTNRFISFNMSLLLVLTAVFSSIPLHSVHAADNASVVANIVGEFQDQLGDSNWNIDSNITIMQYMGNGLYEFTTPTQLKAGSYQYKVALNHSWDGGGVPSQGNLTLNLANDSYVTFWFDYNTQSVTDSTKYTPIANDKLPRLVGTIQSAIGAGNDWKPETSTAIMTDDNFDNVYSYTAHVPKGDYQYKVTLGNTWDENYGANGVKDGSNIQINVTNDADITFYYDANTHNIWTNYSPILTGLDNNIYYDDLKHDTHDSFFRNPFGAVKVDQTVTLRIQAKNHDLESARISYWDDINKIRIELPMTRIGESPDGNFEYWEIKLSFDHPTRIWYYFILKDGTKTAYYGDNDDQLGGVGKATDTVNKDFELTVYDKNFDTPDWMKGAVMYQIFPDRFYNGDTSNDHAKTLSRGNDPIEFHNNWNDLPDNPNNAGTPGYTGDGIWSNDFFGDLKGIDDKLDYLKGLGVSVIYLNPIFESPSNHKYDTADYTKIDEMFGTTQDFEKLMSDAHAKGIKIILDGVFNHTSDDSIYFNRYGKYPGLGAYQAWKEGNQSLSPYGDWYTINSDGTYECWWGYDSLPVIKSLNGSEYNVTSWANFIINDENAISKYWLNPDGNLNDGADGWRLDVENEVAHDFWTHFRNAINTVKFEAPMIAENWGDASLDLLGDSFNSVMNYQFRNDIIDFLIGQSFDDGNGQHNPIDAAKLDQRLMSIYERYPLPAFYSTMNLLGSHDTMRILTVFGYNSADPNENSDAAKQLAEQKLKLATILQMGYPGMADIYYGDEAGVSGGKDPDDRRTFPWGNEDTTLQDFFKNISSIRNNNQVLKTGDLETLYAQNDVYAIGRRIINGKDAFGTSYPDSAAIVAINRSKSDKQIAIDTTKFLRDGVTFKDLINNNVSYSISNGQIVIDVPAMSGVMLISDDGQDLTAPQAPSNVVVTSGNGKVDLSWLQSDGATGYNIYRSSVEGGLYEKIASNVTETTFEDANVTNGLKYVYAISAIDELGNESGISNDAVAYPAYPIGWVGNLTQVSDNHIIGVDKPTEDIYAEVWADGLTNSTGQGPNMIAQLGYKYVSGTVYDSVYGSVYNSVYGVDDSGFTWVNAQYVGDIGNNDQYKASFTPDKIGQWEYLMRFSDNQGQDWITTSTLSFYVVPSDDLIKPTAPYLNQPGTESSRVSLTWNPSTDNVGIYDYEIYRSDGGTFNKIATVSNEVYNYIDTSVINGVTYNYKVVAVDLSFNRTESNVVTIKPDVVPIKVIFNVTVPDYTPDAVNLAGTFPNATWDPSAQQMTKIDNNTYSITLTLDEGTQIEYKYARGSWDKVEKDEYGNEFASNRKVTIVNQGNNEMTINDTVYRWRDIPIFIYSPSSNMTVDSNISTMEVKGNTYKGAKVTINGDSFVQDKNGVFTKDVSLNYGVNKIKIHVEPNDGSVYGNDQGRITELTKDIEIDVIRQENNSGSGTGNNNTSTSGSNSSSTGSGSTGSTSITSNISNTSNTSNTIGVITKNGNVITLTLDAGKAKDLIVNSKDKKVVFDITTIGEGQQKVVQISKDILDTSAANGKDIVIKSDNASIALTKDALNQNQIQNGVNVSIKDNGKPNVTNYVSLSNVVDITISGISGNVTLAKPVEVTLNISKANDPRKVAVYYYNPTTNQWEYVGGKVDASSGTITFNATHFSQYAAFEYDKTFNDIKDNWAKDVIEVLASRHIVEGMTDTQYEPNKTVTRAEFTAMILRLLNIKDETYSGEFSDVKSGDWYANAIEAAYKAGIIEGDGKNARPNDSITREEMTAIAMRAYEMLTQYKEENIGATTFSDDKSISDWARNVVANAAKLGIVNGEPNNVFAPKGNATRAEAAAIIYGLLEKSGNI</sequence>
<keyword id="KW-0106">Calcium</keyword>
<keyword id="KW-0119">Carbohydrate metabolism</keyword>
<keyword id="KW-0134">Cell wall</keyword>
<keyword id="KW-0325">Glycoprotein</keyword>
<keyword id="KW-0326">Glycosidase</keyword>
<keyword id="KW-0378">Hydrolase</keyword>
<keyword id="KW-0479">Metal-binding</keyword>
<keyword id="KW-0677">Repeat</keyword>
<keyword id="KW-0964">Secreted</keyword>
<keyword id="KW-0732">Signal</keyword>
<reference key="1">
    <citation type="journal article" date="1994" name="J. Bacteriol.">
        <title>Pullulanase of Thermoanaerobacterium thermosulfurigenes EM1 (Clostridium thermosulfurogenes): molecular analysis of the gene, composite structure of the enzyme, and a common model for its attachment to the cell surface.</title>
        <authorList>
            <person name="Matuschek M."/>
            <person name="Burchhardt G."/>
            <person name="Sahm K."/>
            <person name="Bahl H."/>
        </authorList>
    </citation>
    <scope>NUCLEOTIDE SEQUENCE [GENOMIC DNA]</scope>
    <source>
        <strain>DSM 3896 / EM1</strain>
    </source>
</reference>